<feature type="chain" id="PRO_0000093124" description="Xylose import ATP-binding protein XylG">
    <location>
        <begin position="1"/>
        <end position="513"/>
    </location>
</feature>
<feature type="domain" description="ABC transporter 1" evidence="1">
    <location>
        <begin position="5"/>
        <end position="242"/>
    </location>
</feature>
<feature type="domain" description="ABC transporter 2" evidence="1">
    <location>
        <begin position="259"/>
        <end position="505"/>
    </location>
</feature>
<feature type="binding site" evidence="1">
    <location>
        <begin position="37"/>
        <end position="44"/>
    </location>
    <ligand>
        <name>ATP</name>
        <dbReference type="ChEBI" id="CHEBI:30616"/>
    </ligand>
</feature>
<organism>
    <name type="scientific">Escherichia coli (strain K12)</name>
    <dbReference type="NCBI Taxonomy" id="83333"/>
    <lineage>
        <taxon>Bacteria</taxon>
        <taxon>Pseudomonadati</taxon>
        <taxon>Pseudomonadota</taxon>
        <taxon>Gammaproteobacteria</taxon>
        <taxon>Enterobacterales</taxon>
        <taxon>Enterobacteriaceae</taxon>
        <taxon>Escherichia</taxon>
    </lineage>
</organism>
<evidence type="ECO:0000255" key="1">
    <source>
        <dbReference type="HAMAP-Rule" id="MF_01722"/>
    </source>
</evidence>
<evidence type="ECO:0000269" key="2">
    <source>
    </source>
</evidence>
<evidence type="ECO:0000305" key="3"/>
<comment type="function">
    <text evidence="1 2 3">Part of the ABC transporter complex XylFGH involved in xylose import. Responsible for energy coupling to the transport system (Probable). The XylFGH system can also transport ribose in absence of xylose.</text>
</comment>
<comment type="catalytic activity">
    <reaction evidence="1">
        <text>D-xylose(out) + ATP + H2O = D-xylose(in) + ADP + phosphate + H(+)</text>
        <dbReference type="Rhea" id="RHEA:29899"/>
        <dbReference type="ChEBI" id="CHEBI:15377"/>
        <dbReference type="ChEBI" id="CHEBI:15378"/>
        <dbReference type="ChEBI" id="CHEBI:30616"/>
        <dbReference type="ChEBI" id="CHEBI:43474"/>
        <dbReference type="ChEBI" id="CHEBI:53455"/>
        <dbReference type="ChEBI" id="CHEBI:456216"/>
        <dbReference type="EC" id="7.5.2.10"/>
    </reaction>
</comment>
<comment type="subunit">
    <text evidence="1">The complex is composed of two ATP-binding proteins (XylG), two transmembrane proteins (XylH) and a solute-binding protein (XylF).</text>
</comment>
<comment type="subcellular location">
    <subcellularLocation>
        <location evidence="1">Cell inner membrane</location>
        <topology evidence="1">Peripheral membrane protein</topology>
    </subcellularLocation>
</comment>
<comment type="similarity">
    <text evidence="1">Belongs to the ABC transporter superfamily. Xylose importer (TC 3.A.1.2.4) family.</text>
</comment>
<keyword id="KW-0067">ATP-binding</keyword>
<keyword id="KW-0997">Cell inner membrane</keyword>
<keyword id="KW-1003">Cell membrane</keyword>
<keyword id="KW-0472">Membrane</keyword>
<keyword id="KW-0547">Nucleotide-binding</keyword>
<keyword id="KW-1185">Reference proteome</keyword>
<keyword id="KW-0677">Repeat</keyword>
<keyword id="KW-0762">Sugar transport</keyword>
<keyword id="KW-1278">Translocase</keyword>
<keyword id="KW-0813">Transport</keyword>
<dbReference type="EC" id="7.5.2.10" evidence="1"/>
<dbReference type="EMBL" id="U00039">
    <property type="protein sequence ID" value="AAB18544.1"/>
    <property type="molecule type" value="Genomic_DNA"/>
</dbReference>
<dbReference type="EMBL" id="U00096">
    <property type="protein sequence ID" value="AAC76591.1"/>
    <property type="molecule type" value="Genomic_DNA"/>
</dbReference>
<dbReference type="EMBL" id="AP009048">
    <property type="protein sequence ID" value="BAE77726.1"/>
    <property type="molecule type" value="Genomic_DNA"/>
</dbReference>
<dbReference type="PIR" id="S47788">
    <property type="entry name" value="S47788"/>
</dbReference>
<dbReference type="RefSeq" id="NP_418024.1">
    <property type="nucleotide sequence ID" value="NC_000913.3"/>
</dbReference>
<dbReference type="RefSeq" id="WP_001146473.1">
    <property type="nucleotide sequence ID" value="NZ_LN832404.1"/>
</dbReference>
<dbReference type="SMR" id="P37388"/>
<dbReference type="BioGRID" id="4262542">
    <property type="interactions" value="13"/>
</dbReference>
<dbReference type="BioGRID" id="852434">
    <property type="interactions" value="1"/>
</dbReference>
<dbReference type="ComplexPortal" id="CPX-4388">
    <property type="entry name" value="Xylose ABC transporter complex"/>
</dbReference>
<dbReference type="FunCoup" id="P37388">
    <property type="interactions" value="253"/>
</dbReference>
<dbReference type="IntAct" id="P37388">
    <property type="interactions" value="7"/>
</dbReference>
<dbReference type="STRING" id="511145.b3567"/>
<dbReference type="TCDB" id="3.A.1.2.4">
    <property type="family name" value="the atp-binding cassette (abc) superfamily"/>
</dbReference>
<dbReference type="PaxDb" id="511145-b3567"/>
<dbReference type="EnsemblBacteria" id="AAC76591">
    <property type="protein sequence ID" value="AAC76591"/>
    <property type="gene ID" value="b3567"/>
</dbReference>
<dbReference type="GeneID" id="948127"/>
<dbReference type="KEGG" id="ecj:JW3539"/>
<dbReference type="KEGG" id="eco:b3567"/>
<dbReference type="KEGG" id="ecoc:C3026_19340"/>
<dbReference type="PATRIC" id="fig|1411691.4.peg.3145"/>
<dbReference type="EchoBASE" id="EB2184"/>
<dbReference type="eggNOG" id="COG1129">
    <property type="taxonomic scope" value="Bacteria"/>
</dbReference>
<dbReference type="HOGENOM" id="CLU_000604_92_3_6"/>
<dbReference type="InParanoid" id="P37388"/>
<dbReference type="OMA" id="RMNYPAM"/>
<dbReference type="OrthoDB" id="9776369at2"/>
<dbReference type="PhylomeDB" id="P37388"/>
<dbReference type="BioCyc" id="EcoCyc:XYLG-MONOMER"/>
<dbReference type="BioCyc" id="MetaCyc:XYLG-MONOMER"/>
<dbReference type="PRO" id="PR:P37388"/>
<dbReference type="Proteomes" id="UP000000625">
    <property type="component" value="Chromosome"/>
</dbReference>
<dbReference type="GO" id="GO:0055052">
    <property type="term" value="C:ATP-binding cassette (ABC) transporter complex, substrate-binding subunit-containing"/>
    <property type="evidence" value="ECO:0000303"/>
    <property type="project" value="ComplexPortal"/>
</dbReference>
<dbReference type="GO" id="GO:0016020">
    <property type="term" value="C:membrane"/>
    <property type="evidence" value="ECO:0000303"/>
    <property type="project" value="ComplexPortal"/>
</dbReference>
<dbReference type="GO" id="GO:0015614">
    <property type="term" value="F:ABC-type D-xylose transporter activity"/>
    <property type="evidence" value="ECO:0007669"/>
    <property type="project" value="UniProtKB-EC"/>
</dbReference>
<dbReference type="GO" id="GO:0005524">
    <property type="term" value="F:ATP binding"/>
    <property type="evidence" value="ECO:0000255"/>
    <property type="project" value="EcoCyc"/>
</dbReference>
<dbReference type="GO" id="GO:0016887">
    <property type="term" value="F:ATP hydrolysis activity"/>
    <property type="evidence" value="ECO:0007669"/>
    <property type="project" value="InterPro"/>
</dbReference>
<dbReference type="GO" id="GO:0015148">
    <property type="term" value="F:D-xylose transmembrane transporter activity"/>
    <property type="evidence" value="ECO:0000315"/>
    <property type="project" value="EcoCyc"/>
</dbReference>
<dbReference type="GO" id="GO:0015752">
    <property type="term" value="P:D-ribose transmembrane transport"/>
    <property type="evidence" value="ECO:0000269"/>
    <property type="project" value="EcoCyc"/>
</dbReference>
<dbReference type="GO" id="GO:0042732">
    <property type="term" value="P:D-xylose metabolic process"/>
    <property type="evidence" value="ECO:0000315"/>
    <property type="project" value="EcoCyc"/>
</dbReference>
<dbReference type="GO" id="GO:0015753">
    <property type="term" value="P:D-xylose transmembrane transport"/>
    <property type="evidence" value="ECO:0000315"/>
    <property type="project" value="EcoCyc"/>
</dbReference>
<dbReference type="CDD" id="cd03216">
    <property type="entry name" value="ABC_Carb_Monos_I"/>
    <property type="match status" value="1"/>
</dbReference>
<dbReference type="CDD" id="cd03215">
    <property type="entry name" value="ABC_Carb_Monos_II"/>
    <property type="match status" value="1"/>
</dbReference>
<dbReference type="FunFam" id="3.40.50.300:FF:000126">
    <property type="entry name" value="Galactose/methyl galactoside import ATP-binding protein MglA"/>
    <property type="match status" value="1"/>
</dbReference>
<dbReference type="FunFam" id="3.40.50.300:FF:000127">
    <property type="entry name" value="Ribose import ATP-binding protein RbsA"/>
    <property type="match status" value="1"/>
</dbReference>
<dbReference type="Gene3D" id="3.40.50.300">
    <property type="entry name" value="P-loop containing nucleotide triphosphate hydrolases"/>
    <property type="match status" value="2"/>
</dbReference>
<dbReference type="InterPro" id="IPR003593">
    <property type="entry name" value="AAA+_ATPase"/>
</dbReference>
<dbReference type="InterPro" id="IPR050107">
    <property type="entry name" value="ABC_carbohydrate_import_ATPase"/>
</dbReference>
<dbReference type="InterPro" id="IPR003439">
    <property type="entry name" value="ABC_transporter-like_ATP-bd"/>
</dbReference>
<dbReference type="InterPro" id="IPR017871">
    <property type="entry name" value="ABC_transporter-like_CS"/>
</dbReference>
<dbReference type="InterPro" id="IPR013455">
    <property type="entry name" value="ABC_transptr_XylG"/>
</dbReference>
<dbReference type="InterPro" id="IPR027417">
    <property type="entry name" value="P-loop_NTPase"/>
</dbReference>
<dbReference type="NCBIfam" id="NF010069">
    <property type="entry name" value="PRK13549.1"/>
    <property type="match status" value="1"/>
</dbReference>
<dbReference type="NCBIfam" id="TIGR02633">
    <property type="entry name" value="xylG"/>
    <property type="match status" value="1"/>
</dbReference>
<dbReference type="PANTHER" id="PTHR43790">
    <property type="entry name" value="CARBOHYDRATE TRANSPORT ATP-BINDING PROTEIN MG119-RELATED"/>
    <property type="match status" value="1"/>
</dbReference>
<dbReference type="PANTHER" id="PTHR43790:SF1">
    <property type="entry name" value="XYLOSE IMPORT ATP-BINDING PROTEIN XYLG"/>
    <property type="match status" value="1"/>
</dbReference>
<dbReference type="Pfam" id="PF00005">
    <property type="entry name" value="ABC_tran"/>
    <property type="match status" value="2"/>
</dbReference>
<dbReference type="SMART" id="SM00382">
    <property type="entry name" value="AAA"/>
    <property type="match status" value="2"/>
</dbReference>
<dbReference type="SUPFAM" id="SSF52540">
    <property type="entry name" value="P-loop containing nucleoside triphosphate hydrolases"/>
    <property type="match status" value="2"/>
</dbReference>
<dbReference type="PROSITE" id="PS00211">
    <property type="entry name" value="ABC_TRANSPORTER_1"/>
    <property type="match status" value="1"/>
</dbReference>
<dbReference type="PROSITE" id="PS50893">
    <property type="entry name" value="ABC_TRANSPORTER_2"/>
    <property type="match status" value="2"/>
</dbReference>
<dbReference type="PROSITE" id="PS51280">
    <property type="entry name" value="XYLG"/>
    <property type="match status" value="1"/>
</dbReference>
<reference key="1">
    <citation type="journal article" date="1994" name="Nucleic Acids Res.">
        <title>Analysis of the Escherichia coli genome. V. DNA sequence of the region from 76.0 to 81.5 minutes.</title>
        <authorList>
            <person name="Sofia H.J."/>
            <person name="Burland V."/>
            <person name="Daniels D.L."/>
            <person name="Plunkett G. III"/>
            <person name="Blattner F.R."/>
        </authorList>
    </citation>
    <scope>NUCLEOTIDE SEQUENCE [LARGE SCALE GENOMIC DNA]</scope>
    <source>
        <strain>K12 / MG1655 / ATCC 47076</strain>
    </source>
</reference>
<reference key="2">
    <citation type="journal article" date="1997" name="Science">
        <title>The complete genome sequence of Escherichia coli K-12.</title>
        <authorList>
            <person name="Blattner F.R."/>
            <person name="Plunkett G. III"/>
            <person name="Bloch C.A."/>
            <person name="Perna N.T."/>
            <person name="Burland V."/>
            <person name="Riley M."/>
            <person name="Collado-Vides J."/>
            <person name="Glasner J.D."/>
            <person name="Rode C.K."/>
            <person name="Mayhew G.F."/>
            <person name="Gregor J."/>
            <person name="Davis N.W."/>
            <person name="Kirkpatrick H.A."/>
            <person name="Goeden M.A."/>
            <person name="Rose D.J."/>
            <person name="Mau B."/>
            <person name="Shao Y."/>
        </authorList>
    </citation>
    <scope>NUCLEOTIDE SEQUENCE [LARGE SCALE GENOMIC DNA]</scope>
    <source>
        <strain>K12 / MG1655 / ATCC 47076</strain>
    </source>
</reference>
<reference key="3">
    <citation type="journal article" date="2006" name="Mol. Syst. Biol.">
        <title>Highly accurate genome sequences of Escherichia coli K-12 strains MG1655 and W3110.</title>
        <authorList>
            <person name="Hayashi K."/>
            <person name="Morooka N."/>
            <person name="Yamamoto Y."/>
            <person name="Fujita K."/>
            <person name="Isono K."/>
            <person name="Choi S."/>
            <person name="Ohtsubo E."/>
            <person name="Baba T."/>
            <person name="Wanner B.L."/>
            <person name="Mori H."/>
            <person name="Horiuchi T."/>
        </authorList>
    </citation>
    <scope>NUCLEOTIDE SEQUENCE [LARGE SCALE GENOMIC DNA]</scope>
    <source>
        <strain>K12 / W3110 / ATCC 27325 / DSM 5911</strain>
    </source>
</reference>
<reference key="4">
    <citation type="journal article" date="1998" name="FEMS Microbiol. Lett.">
        <title>Utilization of D-ribose through D-xylose transporter.</title>
        <authorList>
            <person name="Song S."/>
            <person name="Park C."/>
        </authorList>
    </citation>
    <scope>FUNCTION IN XYLOSE TRANSPORT</scope>
    <scope>ABILITY TO TRANSPORT RIBOSE</scope>
    <source>
        <strain>K12</strain>
    </source>
</reference>
<accession>P37388</accession>
<accession>Q2M7N0</accession>
<name>XYLG_ECOLI</name>
<gene>
    <name evidence="1" type="primary">xylG</name>
    <name type="ordered locus">b3567</name>
    <name type="ordered locus">JW3539</name>
</gene>
<proteinExistence type="evidence at protein level"/>
<protein>
    <recommendedName>
        <fullName evidence="1">Xylose import ATP-binding protein XylG</fullName>
        <ecNumber evidence="1">7.5.2.10</ecNumber>
    </recommendedName>
</protein>
<sequence length="513" mass="56470">MPYLLEMKNITKTFGSVKAIDNVCLRLNAGEIVSLCGENGSGKSTLMKVLCGIYPHGSYEGEIIFAGEEIQASHIRDTERKGIAIIHQELALVKELTVLENIFLGNEITHNGIMDYDLMTLRCQKLLAQVSLSISPDTRVGDLGLGQQQLVEIAKALNKQVRLLILDEPTASLTEQETSILLDIIRDLQQHGIACIYISHKLNEVKAISDTICVIRDGQHIGTRDAAGMSEDDIITMMVGRELTALYPNEPHTTGDEILRIEHLTAWHPVNRHIKRVNDVSFSLKRGEILGIAGLVGAGRTETIQCLFGVWPGQWEGKIYIDGKQVDIRNCQQAIAQGIAMVPEDRKRDGIVPVMAVGKNITLAALNKFTGGISQLDDAAEQKCILESIQQLKVKTSSPDLAIGRLSGGNQQKAILARCLLLNPRILILDEPTRGIDIGAKYEIYKLINQLVQQGIAVIVISSELPEVLGLSDRVLVMHEGKLKANLINHNLTQEQVMEAALRSEHHVEKQSV</sequence>